<accession>P0A276</accession>
<accession>P07376</accession>
<accession>P14302</accession>
<feature type="chain" id="PRO_0000041985" description="Protein MucA">
    <location>
        <begin position="1"/>
        <end position="146"/>
    </location>
</feature>
<feature type="chain" id="PRO_0000027299" description="Protein MucA'">
    <location>
        <begin position="27"/>
        <end position="146"/>
    </location>
</feature>
<feature type="active site" description="For autocatalytic cleavage activity" evidence="1">
    <location>
        <position position="62"/>
    </location>
</feature>
<feature type="active site" description="For autocatalytic cleavage activity" evidence="1">
    <location>
        <position position="99"/>
    </location>
</feature>
<feature type="site" description="Cleavage; by autolysis">
    <location>
        <begin position="26"/>
        <end position="27"/>
    </location>
</feature>
<feature type="sequence conflict" description="In Ref. 2; AAA98277." evidence="2" ref="2">
    <location>
        <position position="13"/>
    </location>
</feature>
<sequence length="146" mass="16527">MKVDIFESSGASRVHSIPFYLQRISAGFPSPAQGYEKQELNLHEYCVRHPSATYFLRVSGSSMEDGRIHDGDVLVVDRSLTASHGSIVVACIHNEFTVKRLLLRPRPCLMPMNKDFPVYYIDPDNESVEIWGVVTHSLIEHPVCLR</sequence>
<name>MUCA_ECOLX</name>
<evidence type="ECO:0000250" key="1"/>
<evidence type="ECO:0000305" key="2"/>
<gene>
    <name type="primary">mucA</name>
</gene>
<comment type="function">
    <text>Involved in UV protection and mutation.</text>
</comment>
<comment type="miscellaneous">
    <text>The mucAB operon is the plasmid-borne analog of the E.coli umuDC operon.</text>
</comment>
<comment type="similarity">
    <text evidence="2">Belongs to the peptidase S24 family.</text>
</comment>
<proteinExistence type="inferred from homology"/>
<organism>
    <name type="scientific">Escherichia coli</name>
    <dbReference type="NCBI Taxonomy" id="562"/>
    <lineage>
        <taxon>Bacteria</taxon>
        <taxon>Pseudomonadati</taxon>
        <taxon>Pseudomonadota</taxon>
        <taxon>Gammaproteobacteria</taxon>
        <taxon>Enterobacterales</taxon>
        <taxon>Enterobacteriaceae</taxon>
        <taxon>Escherichia</taxon>
    </lineage>
</organism>
<keyword id="KW-0068">Autocatalytic cleavage</keyword>
<keyword id="KW-0227">DNA damage</keyword>
<keyword id="KW-0234">DNA repair</keyword>
<keyword id="KW-0378">Hydrolase</keyword>
<keyword id="KW-0614">Plasmid</keyword>
<keyword id="KW-0645">Protease</keyword>
<keyword id="KW-0720">Serine protease</keyword>
<keyword id="KW-0741">SOS mutagenesis</keyword>
<keyword id="KW-0742">SOS response</keyword>
<geneLocation type="plasmid">
    <name>IncN pKM101</name>
</geneLocation>
<dbReference type="EC" id="3.4.21.-"/>
<dbReference type="EMBL" id="D90147">
    <property type="protein sequence ID" value="BAA14175.1"/>
    <property type="molecule type" value="Genomic_DNA"/>
</dbReference>
<dbReference type="EMBL" id="M13388">
    <property type="protein sequence ID" value="AAA98277.1"/>
    <property type="molecule type" value="Genomic_DNA"/>
</dbReference>
<dbReference type="PIR" id="D23157">
    <property type="entry name" value="ZWECAP"/>
</dbReference>
<dbReference type="RefSeq" id="WP_000861760.1">
    <property type="nucleotide sequence ID" value="NZ_WWEL01000030.1"/>
</dbReference>
<dbReference type="RefSeq" id="YP_001096389.1">
    <property type="nucleotide sequence ID" value="NC_009132.1"/>
</dbReference>
<dbReference type="RefSeq" id="YP_004558175.1">
    <property type="nucleotide sequence ID" value="NC_015599.1"/>
</dbReference>
<dbReference type="RefSeq" id="YP_006903037.1">
    <property type="nucleotide sequence ID" value="NC_019033.1"/>
</dbReference>
<dbReference type="RefSeq" id="YP_006953654.1">
    <property type="nucleotide sequence ID" value="NC_019082.1"/>
</dbReference>
<dbReference type="RefSeq" id="YP_006954516.1">
    <property type="nucleotide sequence ID" value="NC_019098.1"/>
</dbReference>
<dbReference type="RefSeq" id="YP_008574883.1">
    <property type="nucleotide sequence ID" value="NC_022374.1"/>
</dbReference>
<dbReference type="RefSeq" id="YP_008826439.1">
    <property type="nucleotide sequence ID" value="NC_022885.1"/>
</dbReference>
<dbReference type="RefSeq" id="YP_009023174.1">
    <property type="nucleotide sequence ID" value="NC_023909.1"/>
</dbReference>
<dbReference type="RefSeq" id="YP_009023255.1">
    <property type="nucleotide sequence ID" value="NC_023910.1"/>
</dbReference>
<dbReference type="RefSeq" id="YP_009060618.1">
    <property type="nucleotide sequence ID" value="NC_024967.1"/>
</dbReference>
<dbReference type="RefSeq" id="YP_009061018.1">
    <property type="nucleotide sequence ID" value="NC_024974.1"/>
</dbReference>
<dbReference type="RefSeq" id="YP_009068558.1">
    <property type="nucleotide sequence ID" value="NC_025141.1"/>
</dbReference>
<dbReference type="RefSeq" id="YP_009071547.1">
    <property type="nucleotide sequence ID" value="NC_025183.1"/>
</dbReference>
<dbReference type="RefSeq" id="YP_724516.1">
    <property type="nucleotide sequence ID" value="NC_007682.3"/>
</dbReference>
<dbReference type="SMR" id="P0A276"/>
<dbReference type="MEROPS" id="S24.003"/>
<dbReference type="GeneID" id="83649171"/>
<dbReference type="GO" id="GO:0003677">
    <property type="term" value="F:DNA binding"/>
    <property type="evidence" value="ECO:0007669"/>
    <property type="project" value="InterPro"/>
</dbReference>
<dbReference type="GO" id="GO:0008236">
    <property type="term" value="F:serine-type peptidase activity"/>
    <property type="evidence" value="ECO:0007669"/>
    <property type="project" value="UniProtKB-KW"/>
</dbReference>
<dbReference type="GO" id="GO:0006281">
    <property type="term" value="P:DNA repair"/>
    <property type="evidence" value="ECO:0007669"/>
    <property type="project" value="UniProtKB-KW"/>
</dbReference>
<dbReference type="GO" id="GO:0006508">
    <property type="term" value="P:proteolysis"/>
    <property type="evidence" value="ECO:0007669"/>
    <property type="project" value="UniProtKB-KW"/>
</dbReference>
<dbReference type="GO" id="GO:0006355">
    <property type="term" value="P:regulation of DNA-templated transcription"/>
    <property type="evidence" value="ECO:0007669"/>
    <property type="project" value="InterPro"/>
</dbReference>
<dbReference type="GO" id="GO:0009432">
    <property type="term" value="P:SOS response"/>
    <property type="evidence" value="ECO:0007669"/>
    <property type="project" value="UniProtKB-KW"/>
</dbReference>
<dbReference type="CDD" id="cd06529">
    <property type="entry name" value="S24_LexA-like"/>
    <property type="match status" value="1"/>
</dbReference>
<dbReference type="Gene3D" id="2.10.109.10">
    <property type="entry name" value="Umud Fragment, subunit A"/>
    <property type="match status" value="1"/>
</dbReference>
<dbReference type="InterPro" id="IPR039418">
    <property type="entry name" value="LexA-like"/>
</dbReference>
<dbReference type="InterPro" id="IPR036286">
    <property type="entry name" value="LexA/Signal_pep-like_sf"/>
</dbReference>
<dbReference type="InterPro" id="IPR050077">
    <property type="entry name" value="LexA_repressor"/>
</dbReference>
<dbReference type="InterPro" id="IPR006197">
    <property type="entry name" value="Peptidase_S24_LexA"/>
</dbReference>
<dbReference type="InterPro" id="IPR015927">
    <property type="entry name" value="Peptidase_S24_S26A/B/C"/>
</dbReference>
<dbReference type="NCBIfam" id="NF007621">
    <property type="entry name" value="PRK10276.1"/>
    <property type="match status" value="1"/>
</dbReference>
<dbReference type="PANTHER" id="PTHR33516">
    <property type="entry name" value="LEXA REPRESSOR"/>
    <property type="match status" value="1"/>
</dbReference>
<dbReference type="PANTHER" id="PTHR33516:SF2">
    <property type="entry name" value="LEXA REPRESSOR-RELATED"/>
    <property type="match status" value="1"/>
</dbReference>
<dbReference type="Pfam" id="PF00717">
    <property type="entry name" value="Peptidase_S24"/>
    <property type="match status" value="1"/>
</dbReference>
<dbReference type="PRINTS" id="PR00726">
    <property type="entry name" value="LEXASERPTASE"/>
</dbReference>
<dbReference type="SUPFAM" id="SSF51306">
    <property type="entry name" value="LexA/Signal peptidase"/>
    <property type="match status" value="1"/>
</dbReference>
<protein>
    <recommendedName>
        <fullName>Protein MucA</fullName>
        <ecNumber>3.4.21.-</ecNumber>
    </recommendedName>
    <component>
        <recommendedName>
            <fullName>Protein MucA'</fullName>
        </recommendedName>
    </component>
</protein>
<reference key="1">
    <citation type="submission" date="1990-05" db="PIR data bank">
        <authorList>
            <person name="Tanooka H."/>
        </authorList>
    </citation>
    <scope>NUCLEOTIDE SEQUENCE [GENOMIC DNA]</scope>
</reference>
<reference key="2">
    <citation type="journal article" date="1985" name="Proc. Natl. Acad. Sci. U.S.A.">
        <title>umuDC and mucAB operons whose products are required for UV light- and chemical-induced mutagenesis: UmuD, MucA, and LexA proteins share homology.</title>
        <authorList>
            <person name="Perry K.L."/>
            <person name="Elledge S.J."/>
            <person name="Mitchell B.B."/>
            <person name="Marsh L."/>
            <person name="Walker G.C."/>
        </authorList>
    </citation>
    <scope>NUCLEOTIDE SEQUENCE [GENOMIC DNA]</scope>
</reference>